<proteinExistence type="inferred from homology"/>
<protein>
    <recommendedName>
        <fullName>Catalase HPII</fullName>
        <ecNumber>1.11.1.6</ecNumber>
    </recommendedName>
</protein>
<gene>
    <name type="primary">katE</name>
</gene>
<evidence type="ECO:0000250" key="1"/>
<evidence type="ECO:0000255" key="2">
    <source>
        <dbReference type="PROSITE-ProRule" id="PRU10013"/>
    </source>
</evidence>
<evidence type="ECO:0000256" key="3">
    <source>
        <dbReference type="SAM" id="MobiDB-lite"/>
    </source>
</evidence>
<evidence type="ECO:0000305" key="4"/>
<dbReference type="EC" id="1.11.1.6"/>
<dbReference type="EMBL" id="L41246">
    <property type="protein sequence ID" value="AAC18407.1"/>
    <property type="molecule type" value="Genomic_DNA"/>
</dbReference>
<dbReference type="PIR" id="S70665">
    <property type="entry name" value="S70665"/>
</dbReference>
<dbReference type="SMR" id="P50979"/>
<dbReference type="GO" id="GO:0005829">
    <property type="term" value="C:cytosol"/>
    <property type="evidence" value="ECO:0007669"/>
    <property type="project" value="TreeGrafter"/>
</dbReference>
<dbReference type="GO" id="GO:0004096">
    <property type="term" value="F:catalase activity"/>
    <property type="evidence" value="ECO:0007669"/>
    <property type="project" value="UniProtKB-EC"/>
</dbReference>
<dbReference type="GO" id="GO:0020037">
    <property type="term" value="F:heme binding"/>
    <property type="evidence" value="ECO:0007669"/>
    <property type="project" value="InterPro"/>
</dbReference>
<dbReference type="GO" id="GO:0046872">
    <property type="term" value="F:metal ion binding"/>
    <property type="evidence" value="ECO:0007669"/>
    <property type="project" value="UniProtKB-KW"/>
</dbReference>
<dbReference type="GO" id="GO:0042744">
    <property type="term" value="P:hydrogen peroxide catabolic process"/>
    <property type="evidence" value="ECO:0007669"/>
    <property type="project" value="UniProtKB-KW"/>
</dbReference>
<dbReference type="GO" id="GO:0006979">
    <property type="term" value="P:response to oxidative stress"/>
    <property type="evidence" value="ECO:0007669"/>
    <property type="project" value="InterPro"/>
</dbReference>
<dbReference type="CDD" id="cd08155">
    <property type="entry name" value="catalase_clade_2"/>
    <property type="match status" value="1"/>
</dbReference>
<dbReference type="CDD" id="cd03132">
    <property type="entry name" value="GATase1_catalase"/>
    <property type="match status" value="1"/>
</dbReference>
<dbReference type="FunFam" id="2.40.180.10:FF:000003">
    <property type="entry name" value="Catalase"/>
    <property type="match status" value="1"/>
</dbReference>
<dbReference type="Gene3D" id="1.20.1370.20">
    <property type="match status" value="1"/>
</dbReference>
<dbReference type="Gene3D" id="3.40.50.880">
    <property type="match status" value="1"/>
</dbReference>
<dbReference type="Gene3D" id="2.40.180.10">
    <property type="entry name" value="Catalase core domain"/>
    <property type="match status" value="1"/>
</dbReference>
<dbReference type="InterPro" id="IPR018028">
    <property type="entry name" value="Catalase"/>
</dbReference>
<dbReference type="InterPro" id="IPR024708">
    <property type="entry name" value="Catalase_AS"/>
</dbReference>
<dbReference type="InterPro" id="IPR024712">
    <property type="entry name" value="Catalase_clade2"/>
</dbReference>
<dbReference type="InterPro" id="IPR043156">
    <property type="entry name" value="Catalase_clade2_helical"/>
</dbReference>
<dbReference type="InterPro" id="IPR011614">
    <property type="entry name" value="Catalase_core"/>
</dbReference>
<dbReference type="InterPro" id="IPR002226">
    <property type="entry name" value="Catalase_haem_BS"/>
</dbReference>
<dbReference type="InterPro" id="IPR010582">
    <property type="entry name" value="Catalase_immune_responsive"/>
</dbReference>
<dbReference type="InterPro" id="IPR041399">
    <property type="entry name" value="Catalase_large_C"/>
</dbReference>
<dbReference type="InterPro" id="IPR020835">
    <property type="entry name" value="Catalase_sf"/>
</dbReference>
<dbReference type="InterPro" id="IPR029062">
    <property type="entry name" value="Class_I_gatase-like"/>
</dbReference>
<dbReference type="PANTHER" id="PTHR42821">
    <property type="entry name" value="CATALASE"/>
    <property type="match status" value="1"/>
</dbReference>
<dbReference type="PANTHER" id="PTHR42821:SF1">
    <property type="entry name" value="CATALASE-B"/>
    <property type="match status" value="1"/>
</dbReference>
<dbReference type="Pfam" id="PF00199">
    <property type="entry name" value="Catalase"/>
    <property type="match status" value="1"/>
</dbReference>
<dbReference type="Pfam" id="PF06628">
    <property type="entry name" value="Catalase-rel"/>
    <property type="match status" value="1"/>
</dbReference>
<dbReference type="Pfam" id="PF18011">
    <property type="entry name" value="Catalase_C"/>
    <property type="match status" value="1"/>
</dbReference>
<dbReference type="PIRSF" id="PIRSF038927">
    <property type="entry name" value="Catalase_clade2"/>
    <property type="match status" value="1"/>
</dbReference>
<dbReference type="PRINTS" id="PR00067">
    <property type="entry name" value="CATALASE"/>
</dbReference>
<dbReference type="SMART" id="SM01060">
    <property type="entry name" value="Catalase"/>
    <property type="match status" value="1"/>
</dbReference>
<dbReference type="SUPFAM" id="SSF52317">
    <property type="entry name" value="Class I glutamine amidotransferase-like"/>
    <property type="match status" value="1"/>
</dbReference>
<dbReference type="SUPFAM" id="SSF56634">
    <property type="entry name" value="Heme-dependent catalase-like"/>
    <property type="match status" value="1"/>
</dbReference>
<dbReference type="PROSITE" id="PS00437">
    <property type="entry name" value="CATALASE_1"/>
    <property type="match status" value="1"/>
</dbReference>
<dbReference type="PROSITE" id="PS00438">
    <property type="entry name" value="CATALASE_2"/>
    <property type="match status" value="1"/>
</dbReference>
<dbReference type="PROSITE" id="PS51402">
    <property type="entry name" value="CATALASE_3"/>
    <property type="match status" value="1"/>
</dbReference>
<name>CATE_MYCAV</name>
<reference key="1">
    <citation type="journal article" date="1996" name="Mol. Microbiol.">
        <title>The katE gene, which encodes the catalase HPII of Mycobacterium avium.</title>
        <authorList>
            <person name="Milano A."/>
            <person name="de Rossi E."/>
            <person name="Gusberti L."/>
            <person name="Heym B."/>
            <person name="Marone P."/>
            <person name="Riccardi G."/>
        </authorList>
    </citation>
    <scope>NUCLEOTIDE SEQUENCE [GENOMIC DNA]</scope>
</reference>
<comment type="function">
    <text>Decomposes hydrogen peroxide into water and oxygen; serves to protect cells from the toxic effects of hydrogen peroxide.</text>
</comment>
<comment type="catalytic activity">
    <reaction evidence="2">
        <text>2 H2O2 = O2 + 2 H2O</text>
        <dbReference type="Rhea" id="RHEA:20309"/>
        <dbReference type="ChEBI" id="CHEBI:15377"/>
        <dbReference type="ChEBI" id="CHEBI:15379"/>
        <dbReference type="ChEBI" id="CHEBI:16240"/>
        <dbReference type="EC" id="1.11.1.6"/>
    </reaction>
</comment>
<comment type="cofactor">
    <cofactor>
        <name>heme</name>
        <dbReference type="ChEBI" id="CHEBI:30413"/>
    </cofactor>
</comment>
<comment type="subcellular location">
    <subcellularLocation>
        <location evidence="4">Cytoplasm</location>
    </subcellularLocation>
</comment>
<comment type="similarity">
    <text evidence="4">Belongs to the catalase family. HPII subfamily.</text>
</comment>
<accession>P50979</accession>
<keyword id="KW-0963">Cytoplasm</keyword>
<keyword id="KW-0349">Heme</keyword>
<keyword id="KW-0376">Hydrogen peroxide</keyword>
<keyword id="KW-0408">Iron</keyword>
<keyword id="KW-0479">Metal-binding</keyword>
<keyword id="KW-0560">Oxidoreductase</keyword>
<keyword id="KW-0575">Peroxidase</keyword>
<feature type="chain" id="PRO_0000084972" description="Catalase HPII">
    <location>
        <begin position="1"/>
        <end position="706"/>
    </location>
</feature>
<feature type="region of interest" description="Disordered" evidence="3">
    <location>
        <begin position="512"/>
        <end position="532"/>
    </location>
</feature>
<feature type="active site" evidence="2">
    <location>
        <position position="77"/>
    </location>
</feature>
<feature type="active site" evidence="2">
    <location>
        <position position="151"/>
    </location>
</feature>
<feature type="binding site" description="axial binding residue" evidence="1">
    <location>
        <position position="365"/>
    </location>
    <ligand>
        <name>heme</name>
        <dbReference type="ChEBI" id="CHEBI:30413"/>
    </ligand>
    <ligandPart>
        <name>Fe</name>
        <dbReference type="ChEBI" id="CHEBI:18248"/>
    </ligandPart>
</feature>
<organism>
    <name type="scientific">Mycobacterium avium</name>
    <dbReference type="NCBI Taxonomy" id="1764"/>
    <lineage>
        <taxon>Bacteria</taxon>
        <taxon>Bacillati</taxon>
        <taxon>Actinomycetota</taxon>
        <taxon>Actinomycetes</taxon>
        <taxon>Mycobacteriales</taxon>
        <taxon>Mycobacteriaceae</taxon>
        <taxon>Mycobacterium</taxon>
        <taxon>Mycobacterium avium complex (MAC)</taxon>
    </lineage>
</organism>
<sequence length="706" mass="78175">MATDHTSDAPDPKQRDLESARFRRDTGYLTTQQGVRVDHTDDALTVGERGPTLLEDFHAREKITHFDHERIPERVVHARGAGAYGYFEPYDDRLAQYTAAKFLTSPGTRTPVFVRFSTVAGSRGSADTVRDVRGFATKFYTEQGNYDLVGNNFPVFFIQDGIKFPVLVHAVKPEPHNEIPQAQSAHDTLWDFVSLQPETLHAIMWLMSDRALPRSYRMMQGFGVHTFRLVNARGRGTFVKFHWKPRLGVHSLIWDECQKIAGKDPDYNRRDLWEAIESGQYPEWELGVQLVAEDDEFSFDFDLLDATKIIPEEQVPVLPVGKMVLNRNPDNFFAETEQVAFHTANVVPGIDFTNDPLLQFRNFSYLDTQLIRLGGPNFAQLPVNRPVAQVRTNQHDGYAQHAIPQGRSSYFKNSIGGGCPALADEDVFRHYTQRVDGQTIGKRAEAFQNHYGQARMFFKSMSPVEAEHIVAAFAFELGKVEMPEIRSAVVAQLARVDDQLAAQVAAKLGLPEPPEEQVDESAPVSPALSQVTDGGDTIASRRIAVLAADGVDVVGTQRFTELMEQRGAVVEVLAPVAGGTLAGGSGGELRVDRSFTTMASVLYDAVVVACGPRSVSTLSDDGYAVHFVTEAYKHLKPIGAYGAGVDLLRKAGIDNRLAEDTDVLNDQAVVTTKAAADELPERFAEEFAAALAQHRCWQRRTDAVPA</sequence>